<organism>
    <name type="scientific">Homo sapiens</name>
    <name type="common">Human</name>
    <dbReference type="NCBI Taxonomy" id="9606"/>
    <lineage>
        <taxon>Eukaryota</taxon>
        <taxon>Metazoa</taxon>
        <taxon>Chordata</taxon>
        <taxon>Craniata</taxon>
        <taxon>Vertebrata</taxon>
        <taxon>Euteleostomi</taxon>
        <taxon>Mammalia</taxon>
        <taxon>Eutheria</taxon>
        <taxon>Euarchontoglires</taxon>
        <taxon>Primates</taxon>
        <taxon>Haplorrhini</taxon>
        <taxon>Catarrhini</taxon>
        <taxon>Hominidae</taxon>
        <taxon>Homo</taxon>
    </lineage>
</organism>
<reference key="1">
    <citation type="journal article" date="2006" name="Cancer Immunol. Immunother.">
        <title>Structure and function of ETAA16: a novel cell surface antigen in Ewing's tumours.</title>
        <authorList>
            <person name="Borowski A."/>
            <person name="Dirksen U."/>
            <person name="Lixin L."/>
            <person name="Shi R.L."/>
            <person name="Goebel U."/>
            <person name="Schneider E.M."/>
        </authorList>
    </citation>
    <scope>NUCLEOTIDE SEQUENCE [MRNA]</scope>
    <scope>TISSUE SPECIFICITY</scope>
    <source>
        <tissue>Ewing sarcoma</tissue>
    </source>
</reference>
<reference key="2">
    <citation type="journal article" date="2005" name="Nature">
        <title>Generation and annotation of the DNA sequences of human chromosomes 2 and 4.</title>
        <authorList>
            <person name="Hillier L.W."/>
            <person name="Graves T.A."/>
            <person name="Fulton R.S."/>
            <person name="Fulton L.A."/>
            <person name="Pepin K.H."/>
            <person name="Minx P."/>
            <person name="Wagner-McPherson C."/>
            <person name="Layman D."/>
            <person name="Wylie K."/>
            <person name="Sekhon M."/>
            <person name="Becker M.C."/>
            <person name="Fewell G.A."/>
            <person name="Delehaunty K.D."/>
            <person name="Miner T.L."/>
            <person name="Nash W.E."/>
            <person name="Kremitzki C."/>
            <person name="Oddy L."/>
            <person name="Du H."/>
            <person name="Sun H."/>
            <person name="Bradshaw-Cordum H."/>
            <person name="Ali J."/>
            <person name="Carter J."/>
            <person name="Cordes M."/>
            <person name="Harris A."/>
            <person name="Isak A."/>
            <person name="van Brunt A."/>
            <person name="Nguyen C."/>
            <person name="Du F."/>
            <person name="Courtney L."/>
            <person name="Kalicki J."/>
            <person name="Ozersky P."/>
            <person name="Abbott S."/>
            <person name="Armstrong J."/>
            <person name="Belter E.A."/>
            <person name="Caruso L."/>
            <person name="Cedroni M."/>
            <person name="Cotton M."/>
            <person name="Davidson T."/>
            <person name="Desai A."/>
            <person name="Elliott G."/>
            <person name="Erb T."/>
            <person name="Fronick C."/>
            <person name="Gaige T."/>
            <person name="Haakenson W."/>
            <person name="Haglund K."/>
            <person name="Holmes A."/>
            <person name="Harkins R."/>
            <person name="Kim K."/>
            <person name="Kruchowski S.S."/>
            <person name="Strong C.M."/>
            <person name="Grewal N."/>
            <person name="Goyea E."/>
            <person name="Hou S."/>
            <person name="Levy A."/>
            <person name="Martinka S."/>
            <person name="Mead K."/>
            <person name="McLellan M.D."/>
            <person name="Meyer R."/>
            <person name="Randall-Maher J."/>
            <person name="Tomlinson C."/>
            <person name="Dauphin-Kohlberg S."/>
            <person name="Kozlowicz-Reilly A."/>
            <person name="Shah N."/>
            <person name="Swearengen-Shahid S."/>
            <person name="Snider J."/>
            <person name="Strong J.T."/>
            <person name="Thompson J."/>
            <person name="Yoakum M."/>
            <person name="Leonard S."/>
            <person name="Pearman C."/>
            <person name="Trani L."/>
            <person name="Radionenko M."/>
            <person name="Waligorski J.E."/>
            <person name="Wang C."/>
            <person name="Rock S.M."/>
            <person name="Tin-Wollam A.-M."/>
            <person name="Maupin R."/>
            <person name="Latreille P."/>
            <person name="Wendl M.C."/>
            <person name="Yang S.-P."/>
            <person name="Pohl C."/>
            <person name="Wallis J.W."/>
            <person name="Spieth J."/>
            <person name="Bieri T.A."/>
            <person name="Berkowicz N."/>
            <person name="Nelson J.O."/>
            <person name="Osborne J."/>
            <person name="Ding L."/>
            <person name="Meyer R."/>
            <person name="Sabo A."/>
            <person name="Shotland Y."/>
            <person name="Sinha P."/>
            <person name="Wohldmann P.E."/>
            <person name="Cook L.L."/>
            <person name="Hickenbotham M.T."/>
            <person name="Eldred J."/>
            <person name="Williams D."/>
            <person name="Jones T.A."/>
            <person name="She X."/>
            <person name="Ciccarelli F.D."/>
            <person name="Izaurralde E."/>
            <person name="Taylor J."/>
            <person name="Schmutz J."/>
            <person name="Myers R.M."/>
            <person name="Cox D.R."/>
            <person name="Huang X."/>
            <person name="McPherson J.D."/>
            <person name="Mardis E.R."/>
            <person name="Clifton S.W."/>
            <person name="Warren W.C."/>
            <person name="Chinwalla A.T."/>
            <person name="Eddy S.R."/>
            <person name="Marra M.A."/>
            <person name="Ovcharenko I."/>
            <person name="Furey T.S."/>
            <person name="Miller W."/>
            <person name="Eichler E.E."/>
            <person name="Bork P."/>
            <person name="Suyama M."/>
            <person name="Torrents D."/>
            <person name="Waterston R.H."/>
            <person name="Wilson R.K."/>
        </authorList>
    </citation>
    <scope>NUCLEOTIDE SEQUENCE [LARGE SCALE GENOMIC DNA]</scope>
</reference>
<reference key="3">
    <citation type="journal article" date="2004" name="Genome Res.">
        <title>The status, quality, and expansion of the NIH full-length cDNA project: the Mammalian Gene Collection (MGC).</title>
        <authorList>
            <consortium name="The MGC Project Team"/>
        </authorList>
    </citation>
    <scope>NUCLEOTIDE SEQUENCE [LARGE SCALE MRNA]</scope>
    <scope>VARIANTS THR-221; ASN-389 AND SER-771</scope>
    <source>
        <tissue>Prostate</tissue>
        <tissue>Uterus</tissue>
    </source>
</reference>
<reference key="4">
    <citation type="journal article" date="2007" name="Science">
        <title>ATM and ATR substrate analysis reveals extensive protein networks responsive to DNA damage.</title>
        <authorList>
            <person name="Matsuoka S."/>
            <person name="Ballif B.A."/>
            <person name="Smogorzewska A."/>
            <person name="McDonald E.R. III"/>
            <person name="Hurov K.E."/>
            <person name="Luo J."/>
            <person name="Bakalarski C.E."/>
            <person name="Zhao Z."/>
            <person name="Solimini N."/>
            <person name="Lerenthal Y."/>
            <person name="Shiloh Y."/>
            <person name="Gygi S.P."/>
            <person name="Elledge S.J."/>
        </authorList>
    </citation>
    <scope>PHOSPHORYLATION [LARGE SCALE ANALYSIS] AT SER-833</scope>
    <scope>IDENTIFICATION BY MASS SPECTROMETRY [LARGE SCALE ANALYSIS]</scope>
    <source>
        <tissue>Embryonic kidney</tissue>
    </source>
</reference>
<reference key="5">
    <citation type="journal article" date="2013" name="J. Proteome Res.">
        <title>Toward a comprehensive characterization of a human cancer cell phosphoproteome.</title>
        <authorList>
            <person name="Zhou H."/>
            <person name="Di Palma S."/>
            <person name="Preisinger C."/>
            <person name="Peng M."/>
            <person name="Polat A.N."/>
            <person name="Heck A.J."/>
            <person name="Mohammed S."/>
        </authorList>
    </citation>
    <scope>PHOSPHORYLATION [LARGE SCALE ANALYSIS] AT SER-186 AND SER-464</scope>
    <scope>IDENTIFICATION BY MASS SPECTROMETRY [LARGE SCALE ANALYSIS]</scope>
    <source>
        <tissue>Erythroleukemia</tissue>
    </source>
</reference>
<reference key="6">
    <citation type="journal article" date="2015" name="Cell Rep.">
        <title>SUMO-2 orchestrates chromatin modifiers in response to DNA damage.</title>
        <authorList>
            <person name="Hendriks I.A."/>
            <person name="Treffers L.W."/>
            <person name="Verlaan-de Vries M."/>
            <person name="Olsen J.V."/>
            <person name="Vertegaal A.C."/>
        </authorList>
    </citation>
    <scope>SUMOYLATION [LARGE SCALE ANALYSIS] AT LYS-442</scope>
    <scope>IDENTIFICATION BY MASS SPECTROMETRY [LARGE SCALE ANALYSIS]</scope>
</reference>
<reference key="7">
    <citation type="journal article" date="2017" name="Nat. Struct. Mol. Biol.">
        <title>Site-specific mapping of the human SUMO proteome reveals co-modification with phosphorylation.</title>
        <authorList>
            <person name="Hendriks I.A."/>
            <person name="Lyon D."/>
            <person name="Young C."/>
            <person name="Jensen L.J."/>
            <person name="Vertegaal A.C."/>
            <person name="Nielsen M.L."/>
        </authorList>
    </citation>
    <scope>SUMOYLATION [LARGE SCALE ANALYSIS] AT LYS-85; LYS-414; LYS-442; LYS-480; LYS-507; LYS-533 AND LYS-535</scope>
    <scope>IDENTIFICATION BY MASS SPECTROMETRY [LARGE SCALE ANALYSIS]</scope>
</reference>
<reference key="8">
    <citation type="journal article" date="2006" name="Science">
        <title>The consensus coding sequences of human breast and colorectal cancers.</title>
        <authorList>
            <person name="Sjoeblom T."/>
            <person name="Jones S."/>
            <person name="Wood L.D."/>
            <person name="Parsons D.W."/>
            <person name="Lin J."/>
            <person name="Barber T.D."/>
            <person name="Mandelker D."/>
            <person name="Leary R.J."/>
            <person name="Ptak J."/>
            <person name="Silliman N."/>
            <person name="Szabo S."/>
            <person name="Buckhaults P."/>
            <person name="Farrell C."/>
            <person name="Meeh P."/>
            <person name="Markowitz S.D."/>
            <person name="Willis J."/>
            <person name="Dawson D."/>
            <person name="Willson J.K.V."/>
            <person name="Gazdar A.F."/>
            <person name="Hartigan J."/>
            <person name="Wu L."/>
            <person name="Liu C."/>
            <person name="Parmigiani G."/>
            <person name="Park B.H."/>
            <person name="Bachman K.E."/>
            <person name="Papadopoulos N."/>
            <person name="Vogelstein B."/>
            <person name="Kinzler K.W."/>
            <person name="Velculescu V.E."/>
        </authorList>
    </citation>
    <scope>VARIANT [LARGE SCALE ANALYSIS] ASP-50</scope>
</reference>
<reference key="9">
    <citation type="journal article" date="2016" name="J. Biol. Chem.">
        <title>Ewing Tumor-associated Antigen 1 interacts with replication protein A to promote restart of stalled replication forks.</title>
        <authorList>
            <person name="Feng S."/>
            <person name="Zhao Y."/>
            <person name="Xu Y."/>
            <person name="Ning S."/>
            <person name="Huo W."/>
            <person name="Hou M."/>
            <person name="Gao G."/>
            <person name="Ji J."/>
            <person name="Guo R."/>
            <person name="Xu D."/>
        </authorList>
    </citation>
    <scope>FUNCTION</scope>
    <scope>SUBCELLULAR LOCATION</scope>
    <scope>DOMAIN</scope>
    <scope>INTERACTION WITH RPA1 AND RPA2</scope>
</reference>
<reference key="10">
    <citation type="journal article" date="2016" name="Nat. Cell Biol.">
        <title>ETAA1 acts at stalled replication forks to maintain genome integrity.</title>
        <authorList>
            <person name="Bass T.E."/>
            <person name="Luzwick J.W."/>
            <person name="Kavanaugh G."/>
            <person name="Carroll C."/>
            <person name="Dungrawala H."/>
            <person name="Glick G.G."/>
            <person name="Feldkamp M.D."/>
            <person name="Putney R."/>
            <person name="Chazin W.J."/>
            <person name="Cortez D."/>
        </authorList>
    </citation>
    <scope>FUNCTION</scope>
    <scope>SUBCELLULAR LOCATION</scope>
    <scope>DOMAIN</scope>
    <scope>PHOSPHORYLATION</scope>
    <scope>INTERACTION WITH RPA1; RPA2 AND ATR</scope>
    <scope>MUTAGENESIS OF TRP-107</scope>
</reference>
<reference key="11">
    <citation type="journal article" date="2016" name="Nat. Cell Biol.">
        <title>Activation of the ATR kinase by the RPA-binding protein ETAA1.</title>
        <authorList>
            <person name="Haahr P."/>
            <person name="Hoffmann S."/>
            <person name="Tollenaere M.A."/>
            <person name="Ho T."/>
            <person name="Toledo L.I."/>
            <person name="Mann M."/>
            <person name="Bekker-Jensen S."/>
            <person name="Raeschle M."/>
            <person name="Mailand N."/>
        </authorList>
    </citation>
    <scope>FUNCTION</scope>
    <scope>SUBCELLULAR LOCATION</scope>
    <scope>DOMAIN</scope>
    <scope>INTERACTION WITH RPA1; RPA2 AND ATR</scope>
    <scope>PHOSPHORYLATION</scope>
    <scope>MUTAGENESIS OF 106-PHE-TRP-107</scope>
</reference>
<reference key="12">
    <citation type="journal article" date="2018" name="Science">
        <title>An intrinsic S/G2 checkpoint enforced by ATR.</title>
        <authorList>
            <person name="Saldivar J.C."/>
            <person name="Hamperl S."/>
            <person name="Bocek M.J."/>
            <person name="Chung M."/>
            <person name="Bass T.E."/>
            <person name="Cisneros-Soberanis F."/>
            <person name="Samejima K."/>
            <person name="Xie L."/>
            <person name="Paulson J.R."/>
            <person name="Earnshaw W.C."/>
            <person name="Cortez D."/>
            <person name="Meyer T."/>
            <person name="Cimprich K.A."/>
        </authorList>
    </citation>
    <scope>FUNCTION</scope>
</reference>
<feature type="chain" id="PRO_0000280099" description="Ewing's tumor-associated antigen 1">
    <location>
        <begin position="1"/>
        <end position="926"/>
    </location>
</feature>
<feature type="region of interest" description="Disordered" evidence="2">
    <location>
        <begin position="1"/>
        <end position="112"/>
    </location>
</feature>
<feature type="region of interest" description="Disordered" evidence="2">
    <location>
        <begin position="640"/>
        <end position="663"/>
    </location>
</feature>
<feature type="region of interest" description="Disordered" evidence="2">
    <location>
        <begin position="878"/>
        <end position="905"/>
    </location>
</feature>
<feature type="coiled-coil region" evidence="1">
    <location>
        <begin position="183"/>
        <end position="214"/>
    </location>
</feature>
<feature type="short sequence motif" description="ATR-activation domain (AAD)" evidence="7 8">
    <location>
        <begin position="105"/>
        <end position="111"/>
    </location>
</feature>
<feature type="short sequence motif" description="RBM1 motif" evidence="6 7 8">
    <location>
        <begin position="603"/>
        <end position="618"/>
    </location>
</feature>
<feature type="short sequence motif" description="RBM2 motif" evidence="6 7 8">
    <location>
        <begin position="891"/>
        <end position="913"/>
    </location>
</feature>
<feature type="compositionally biased region" description="Basic and acidic residues" evidence="2">
    <location>
        <begin position="72"/>
        <end position="85"/>
    </location>
</feature>
<feature type="compositionally biased region" description="Polar residues" evidence="2">
    <location>
        <begin position="640"/>
        <end position="653"/>
    </location>
</feature>
<feature type="compositionally biased region" description="Basic and acidic residues" evidence="2">
    <location>
        <begin position="882"/>
        <end position="905"/>
    </location>
</feature>
<feature type="modified residue" description="Phosphoserine" evidence="15">
    <location>
        <position position="186"/>
    </location>
</feature>
<feature type="modified residue" description="Phosphoserine" evidence="15">
    <location>
        <position position="464"/>
    </location>
</feature>
<feature type="modified residue" description="Phosphoserine" evidence="14">
    <location>
        <position position="833"/>
    </location>
</feature>
<feature type="cross-link" description="Glycyl lysine isopeptide (Lys-Gly) (interchain with G-Cter in SUMO2)" evidence="17">
    <location>
        <position position="85"/>
    </location>
</feature>
<feature type="cross-link" description="Glycyl lysine isopeptide (Lys-Gly) (interchain with G-Cter in SUMO2)" evidence="17">
    <location>
        <position position="414"/>
    </location>
</feature>
<feature type="cross-link" description="Glycyl lysine isopeptide (Lys-Gly) (interchain with G-Cter in SUMO2)" evidence="16 17">
    <location>
        <position position="442"/>
    </location>
</feature>
<feature type="cross-link" description="Glycyl lysine isopeptide (Lys-Gly) (interchain with G-Cter in SUMO2)" evidence="17">
    <location>
        <position position="480"/>
    </location>
</feature>
<feature type="cross-link" description="Glycyl lysine isopeptide (Lys-Gly) (interchain with G-Cter in SUMO2)" evidence="17">
    <location>
        <position position="507"/>
    </location>
</feature>
<feature type="cross-link" description="Glycyl lysine isopeptide (Lys-Gly) (interchain with G-Cter in SUMO2)" evidence="17">
    <location>
        <position position="533"/>
    </location>
</feature>
<feature type="cross-link" description="Glycyl lysine isopeptide (Lys-Gly) (interchain with G-Cter in SUMO2)" evidence="17">
    <location>
        <position position="535"/>
    </location>
</feature>
<feature type="sequence variant" id="VAR_035916" description="In a colorectal cancer sample; somatic mutation." evidence="5">
    <original>E</original>
    <variation>D</variation>
    <location>
        <position position="50"/>
    </location>
</feature>
<feature type="sequence variant" id="VAR_031053" description="In dbSNP:rs13036061." evidence="3">
    <original>M</original>
    <variation>T</variation>
    <location>
        <position position="221"/>
    </location>
</feature>
<feature type="sequence variant" id="VAR_031054" description="In dbSNP:rs3770657." evidence="3">
    <original>S</original>
    <variation>N</variation>
    <location>
        <position position="389"/>
    </location>
</feature>
<feature type="sequence variant" id="VAR_031055" description="In dbSNP:rs3770656.">
    <original>P</original>
    <variation>L</variation>
    <location>
        <position position="715"/>
    </location>
</feature>
<feature type="sequence variant" id="VAR_031056" description="In dbSNP:rs3770655." evidence="3">
    <original>P</original>
    <variation>S</variation>
    <location>
        <position position="771"/>
    </location>
</feature>
<feature type="mutagenesis site" description="Reduced ability to promote replication fork progression and integrity following DNA damage." evidence="7">
    <original>FW</original>
    <variation>AA</variation>
    <location>
        <begin position="106"/>
        <end position="107"/>
    </location>
</feature>
<feature type="mutagenesis site" description="Reduced interaction with ATR." evidence="8">
    <original>W</original>
    <variation>A</variation>
    <location>
        <position position="107"/>
    </location>
</feature>
<feature type="sequence conflict" description="In Ref. 3; AAH33075." evidence="11" ref="3">
    <original>G</original>
    <variation>R</variation>
    <location>
        <position position="439"/>
    </location>
</feature>
<feature type="helix" evidence="18">
    <location>
        <begin position="604"/>
        <end position="613"/>
    </location>
</feature>
<proteinExistence type="evidence at protein level"/>
<comment type="function">
    <text evidence="6 7 8 9">Replication stress response protein that accumulates at DNA damage sites and promotes replication fork progression and integrity (PubMed:27601467, PubMed:27723717, PubMed:27723720). Recruited to stalled replication forks via interaction with the RPA complex and directly stimulates ATR kinase activity independently of TOPBP1 (PubMed:27723717, PubMed:27723720, PubMed:30139873). Probably only regulates a subset of ATR targets (PubMed:27723717, PubMed:27723720).</text>
</comment>
<comment type="subunit">
    <text evidence="6 7 8">Interacts (via RBM1 motif) with RPA1 (PubMed:27601467, PubMed:27723717, PubMed:27723720). Interacts (via RBM2 motif) with RPA2 (PubMed:27601467, PubMed:27723717, PubMed:27723720). Interacts (via the ATR-activation domain motif) with ATR (PubMed:27723717, PubMed:27723720).</text>
</comment>
<comment type="subcellular location">
    <subcellularLocation>
        <location evidence="6 7 8">Nucleus</location>
    </subcellularLocation>
    <text evidence="6 7 8">Localizes at sites of DNA damage following replication stress (PubMed:27601467, PubMed:27723717, PubMed:27723720). Recruited to stalled replication forks via interaction with RPA1 and RPA2 subunits of the RPA complex (PubMed:27601467, PubMed:27723720).</text>
</comment>
<comment type="tissue specificity">
    <text evidence="4">Expressed at high levels in the brain, liver kidney and Ewing tumor cell lines.</text>
</comment>
<comment type="domain">
    <text evidence="6 7 8">The RBM1 (RPA1-binding, also named RPA70N-binding) motif mediates interaction with RPA1 (PubMed:27601467, PubMed:27723717, PubMed:27723720). The RBM2 (RPA2-binding, also named RPA32C-binding) motif mediates interaction with RPA2 (PubMed:27601467, PubMed:27723717, PubMed:27723720).</text>
</comment>
<comment type="domain">
    <text evidence="7 8">The ATR-activation domain (AAD) motif is required to bind and activate ATR (PubMed:27723717, PubMed:27723720).</text>
</comment>
<comment type="PTM">
    <text evidence="12">Phosphorylated by ATR.</text>
</comment>
<comment type="caution">
    <text evidence="4 6 7 8">Initially reported to localize in the cytoplasm (PubMed:16003559). A number of studies showed that it accumulates at DNA damage sites in the nucleus (PubMed:27601467, PubMed:27723717, PubMed:27723720).</text>
</comment>
<comment type="sequence caution" evidence="11">
    <conflict type="miscellaneous discrepancy">
        <sequence resource="EMBL-CDS" id="AAH33075"/>
    </conflict>
</comment>
<comment type="sequence caution" evidence="11">
    <conflict type="erroneous gene model prediction">
        <sequence resource="EMBL-CDS" id="AAX93100"/>
    </conflict>
</comment>
<protein>
    <recommendedName>
        <fullName evidence="13">Ewing's tumor-associated antigen 1</fullName>
    </recommendedName>
    <alternativeName>
        <fullName evidence="10">Ewing's tumor-associated antigen 16</fullName>
    </alternativeName>
</protein>
<sequence length="926" mass="103440">MSRRRKHDDSPSPKKTPHKTVAAEECGSVVEPGRRRLRSARGSWPCGAREGPPGPVRQREQPPTAALCSKSNPEERYETPKRALKMDSLSSSFSSPNDPDGQNDIFWDQNSPLTKQLGKGRKKQIYTTDSDEISHIVNRIAPQDEKPTTNSMLDMWIGETAIPCTPSVAKGKSRAKISCTKLKTQSQEEELMKLAKQFDKNMEELDVIQEQNKRNYDFTQMISETEILSNYKDNIQMWSLHNIVPEIDNATKKPIKGNTKISVANNQNSSQKPFDQIAEAAFNAIFDGSTQKCSGQLSQELPEAFWSTSNTTFVKTNALKEEKIITNETLVIEKLSNKTPRSLSSQVDTPIMTKSCVTSCTKEPETSNKYIDAFTTSDFEDDWENLLGSEPFAMQNIDMPELFPSKTAHVTDQKEICTFNSKTVKNTSRANTSPDARLGDSKVLQDLSSKTYDRELIDAEYRFSPNSNKSNKLSTGNKMKFENSSNKIVIQDEIQNCIVTSNLTKIKEDILTNSTEASERKSALNTRYSNEQKNKCILNQSIKAPVNTDLFGSANLGSKTSVSNPNQTSASKVGSFFDDWNDPSFANEIIKACHQLDNTWEADDVDDDLLYQACDDIERLTQQQDIRKDSKTSESICEINNNSEHGAKLTQQQDIRKDSKTSESICEINNNSEHGAKNMFAISKQGSNLVQSKHLNPGSISVQTSLTNSSQIDKPMKMEKGEMYGNSPRFLGATNLTMYSKISNCQINNLHVSYTNTDVPIQVNSSKLVLPGSSSLNVTSDHMNTEITTYKKKLSTNQPCHKTVTDEAQSNLNTTVGFSKFTFTRMKNSQILSQFNQNCITGSMSDTKITQGVEKKKGVNPLLEEAVGQQSLVKLSESLKQSSKEEEEKNRKCSPEEIQRKRQEALVRRMAKARASSVNAAPTSFL</sequence>
<evidence type="ECO:0000255" key="1"/>
<evidence type="ECO:0000256" key="2">
    <source>
        <dbReference type="SAM" id="MobiDB-lite"/>
    </source>
</evidence>
<evidence type="ECO:0000269" key="3">
    <source>
    </source>
</evidence>
<evidence type="ECO:0000269" key="4">
    <source>
    </source>
</evidence>
<evidence type="ECO:0000269" key="5">
    <source>
    </source>
</evidence>
<evidence type="ECO:0000269" key="6">
    <source>
    </source>
</evidence>
<evidence type="ECO:0000269" key="7">
    <source>
    </source>
</evidence>
<evidence type="ECO:0000269" key="8">
    <source>
    </source>
</evidence>
<evidence type="ECO:0000269" key="9">
    <source>
    </source>
</evidence>
<evidence type="ECO:0000303" key="10">
    <source>
    </source>
</evidence>
<evidence type="ECO:0000305" key="11"/>
<evidence type="ECO:0000305" key="12">
    <source>
    </source>
</evidence>
<evidence type="ECO:0000312" key="13">
    <source>
        <dbReference type="HGNC" id="HGNC:24648"/>
    </source>
</evidence>
<evidence type="ECO:0007744" key="14">
    <source>
    </source>
</evidence>
<evidence type="ECO:0007744" key="15">
    <source>
    </source>
</evidence>
<evidence type="ECO:0007744" key="16">
    <source>
    </source>
</evidence>
<evidence type="ECO:0007744" key="17">
    <source>
    </source>
</evidence>
<evidence type="ECO:0007829" key="18">
    <source>
        <dbReference type="PDB" id="8JZV"/>
    </source>
</evidence>
<dbReference type="EMBL" id="AJ242682">
    <property type="protein sequence ID" value="CAB76378.2"/>
    <property type="molecule type" value="mRNA"/>
</dbReference>
<dbReference type="EMBL" id="AC023668">
    <property type="protein sequence ID" value="AAX93100.1"/>
    <property type="status" value="ALT_SEQ"/>
    <property type="molecule type" value="Genomic_DNA"/>
</dbReference>
<dbReference type="EMBL" id="BC033075">
    <property type="protein sequence ID" value="AAH33075.1"/>
    <property type="status" value="ALT_SEQ"/>
    <property type="molecule type" value="mRNA"/>
</dbReference>
<dbReference type="EMBL" id="BC040001">
    <property type="protein sequence ID" value="AAH40001.1"/>
    <property type="molecule type" value="mRNA"/>
</dbReference>
<dbReference type="CCDS" id="CCDS1882.1"/>
<dbReference type="RefSeq" id="NP_061875.2">
    <property type="nucleotide sequence ID" value="NM_019002.3"/>
</dbReference>
<dbReference type="PDB" id="8JZV">
    <property type="method" value="X-ray"/>
    <property type="resolution" value="1.50 A"/>
    <property type="chains" value="B=599-622"/>
</dbReference>
<dbReference type="PDBsum" id="8JZV"/>
<dbReference type="SMR" id="Q9NY74"/>
<dbReference type="BioGRID" id="119971">
    <property type="interactions" value="146"/>
</dbReference>
<dbReference type="DIP" id="DIP-47294N"/>
<dbReference type="FunCoup" id="Q9NY74">
    <property type="interactions" value="2360"/>
</dbReference>
<dbReference type="IntAct" id="Q9NY74">
    <property type="interactions" value="15"/>
</dbReference>
<dbReference type="MINT" id="Q9NY74"/>
<dbReference type="STRING" id="9606.ENSP00000272342"/>
<dbReference type="GlyCosmos" id="Q9NY74">
    <property type="glycosylation" value="1 site, 1 glycan"/>
</dbReference>
<dbReference type="GlyGen" id="Q9NY74">
    <property type="glycosylation" value="1 site, 1 O-linked glycan (1 site)"/>
</dbReference>
<dbReference type="iPTMnet" id="Q9NY74"/>
<dbReference type="PhosphoSitePlus" id="Q9NY74"/>
<dbReference type="BioMuta" id="ETAA1"/>
<dbReference type="DMDM" id="74734709"/>
<dbReference type="jPOST" id="Q9NY74"/>
<dbReference type="MassIVE" id="Q9NY74"/>
<dbReference type="PaxDb" id="9606-ENSP00000272342"/>
<dbReference type="PeptideAtlas" id="Q9NY74"/>
<dbReference type="ProteomicsDB" id="83186"/>
<dbReference type="Pumba" id="Q9NY74"/>
<dbReference type="Antibodypedia" id="47441">
    <property type="antibodies" value="55 antibodies from 20 providers"/>
</dbReference>
<dbReference type="DNASU" id="54465"/>
<dbReference type="Ensembl" id="ENST00000272342.6">
    <property type="protein sequence ID" value="ENSP00000272342.5"/>
    <property type="gene ID" value="ENSG00000143971.9"/>
</dbReference>
<dbReference type="GeneID" id="54465"/>
<dbReference type="KEGG" id="hsa:54465"/>
<dbReference type="MANE-Select" id="ENST00000272342.6">
    <property type="protein sequence ID" value="ENSP00000272342.5"/>
    <property type="RefSeq nucleotide sequence ID" value="NM_019002.4"/>
    <property type="RefSeq protein sequence ID" value="NP_061875.2"/>
</dbReference>
<dbReference type="UCSC" id="uc002sdz.2">
    <property type="organism name" value="human"/>
</dbReference>
<dbReference type="AGR" id="HGNC:24648"/>
<dbReference type="CTD" id="54465"/>
<dbReference type="DisGeNET" id="54465"/>
<dbReference type="GeneCards" id="ETAA1"/>
<dbReference type="HGNC" id="HGNC:24648">
    <property type="gene designation" value="ETAA1"/>
</dbReference>
<dbReference type="HPA" id="ENSG00000143971">
    <property type="expression patterns" value="Low tissue specificity"/>
</dbReference>
<dbReference type="MIM" id="613196">
    <property type="type" value="gene"/>
</dbReference>
<dbReference type="neXtProt" id="NX_Q9NY74"/>
<dbReference type="OpenTargets" id="ENSG00000143971"/>
<dbReference type="PharmGKB" id="PA162385444"/>
<dbReference type="VEuPathDB" id="HostDB:ENSG00000143971"/>
<dbReference type="eggNOG" id="ENOG502QTMP">
    <property type="taxonomic scope" value="Eukaryota"/>
</dbReference>
<dbReference type="GeneTree" id="ENSGT00390000009597"/>
<dbReference type="HOGENOM" id="CLU_015351_0_0_1"/>
<dbReference type="InParanoid" id="Q9NY74"/>
<dbReference type="OMA" id="CITGSMS"/>
<dbReference type="OrthoDB" id="9378993at2759"/>
<dbReference type="PAN-GO" id="Q9NY74">
    <property type="GO annotations" value="6 GO annotations based on evolutionary models"/>
</dbReference>
<dbReference type="PhylomeDB" id="Q9NY74"/>
<dbReference type="TreeFam" id="TF333863"/>
<dbReference type="PathwayCommons" id="Q9NY74"/>
<dbReference type="SignaLink" id="Q9NY74"/>
<dbReference type="BioGRID-ORCS" id="54465">
    <property type="hits" value="16 hits in 1160 CRISPR screens"/>
</dbReference>
<dbReference type="ChiTaRS" id="ETAA1">
    <property type="organism name" value="human"/>
</dbReference>
<dbReference type="GenomeRNAi" id="54465"/>
<dbReference type="Pharos" id="Q9NY74">
    <property type="development level" value="Tbio"/>
</dbReference>
<dbReference type="PRO" id="PR:Q9NY74"/>
<dbReference type="Proteomes" id="UP000005640">
    <property type="component" value="Chromosome 2"/>
</dbReference>
<dbReference type="RNAct" id="Q9NY74">
    <property type="molecule type" value="protein"/>
</dbReference>
<dbReference type="Bgee" id="ENSG00000143971">
    <property type="expression patterns" value="Expressed in secondary oocyte and 146 other cell types or tissues"/>
</dbReference>
<dbReference type="ExpressionAtlas" id="Q9NY74">
    <property type="expression patterns" value="baseline and differential"/>
</dbReference>
<dbReference type="GO" id="GO:0005829">
    <property type="term" value="C:cytosol"/>
    <property type="evidence" value="ECO:0000314"/>
    <property type="project" value="HPA"/>
</dbReference>
<dbReference type="GO" id="GO:0043231">
    <property type="term" value="C:intracellular membrane-bounded organelle"/>
    <property type="evidence" value="ECO:0000314"/>
    <property type="project" value="HPA"/>
</dbReference>
<dbReference type="GO" id="GO:0043596">
    <property type="term" value="C:nuclear replication fork"/>
    <property type="evidence" value="ECO:0000314"/>
    <property type="project" value="UniProtKB"/>
</dbReference>
<dbReference type="GO" id="GO:0016607">
    <property type="term" value="C:nuclear speck"/>
    <property type="evidence" value="ECO:0000314"/>
    <property type="project" value="HPA"/>
</dbReference>
<dbReference type="GO" id="GO:0005654">
    <property type="term" value="C:nucleoplasm"/>
    <property type="evidence" value="ECO:0000314"/>
    <property type="project" value="HPA"/>
</dbReference>
<dbReference type="GO" id="GO:0005886">
    <property type="term" value="C:plasma membrane"/>
    <property type="evidence" value="ECO:0000314"/>
    <property type="project" value="HPA"/>
</dbReference>
<dbReference type="GO" id="GO:0043539">
    <property type="term" value="F:protein serine/threonine kinase activator activity"/>
    <property type="evidence" value="ECO:0000314"/>
    <property type="project" value="UniProtKB"/>
</dbReference>
<dbReference type="GO" id="GO:0006974">
    <property type="term" value="P:DNA damage response"/>
    <property type="evidence" value="ECO:0000314"/>
    <property type="project" value="UniProtKB"/>
</dbReference>
<dbReference type="GO" id="GO:0006281">
    <property type="term" value="P:DNA repair"/>
    <property type="evidence" value="ECO:0007669"/>
    <property type="project" value="UniProtKB-KW"/>
</dbReference>
<dbReference type="GO" id="GO:0044818">
    <property type="term" value="P:mitotic G2/M transition checkpoint"/>
    <property type="evidence" value="ECO:0000314"/>
    <property type="project" value="UniProt"/>
</dbReference>
<dbReference type="GO" id="GO:0071902">
    <property type="term" value="P:positive regulation of protein serine/threonine kinase activity"/>
    <property type="evidence" value="ECO:0000314"/>
    <property type="project" value="UniProtKB"/>
</dbReference>
<dbReference type="GO" id="GO:2000001">
    <property type="term" value="P:regulation of DNA damage checkpoint"/>
    <property type="evidence" value="ECO:0000314"/>
    <property type="project" value="UniProtKB"/>
</dbReference>
<dbReference type="GO" id="GO:0031297">
    <property type="term" value="P:replication fork processing"/>
    <property type="evidence" value="ECO:0000314"/>
    <property type="project" value="UniProtKB"/>
</dbReference>
<dbReference type="InterPro" id="IPR029406">
    <property type="entry name" value="ETAA1"/>
</dbReference>
<dbReference type="PANTHER" id="PTHR16434:SF2">
    <property type="entry name" value="EWING'S TUMOR-ASSOCIATED ANTIGEN 1"/>
    <property type="match status" value="1"/>
</dbReference>
<dbReference type="PANTHER" id="PTHR16434">
    <property type="entry name" value="EWING'S TUMOR-ASSOCIATED ANTIGEN 1 ETAA1"/>
    <property type="match status" value="1"/>
</dbReference>
<dbReference type="Pfam" id="PF15350">
    <property type="entry name" value="ETAA1"/>
    <property type="match status" value="2"/>
</dbReference>
<keyword id="KW-0002">3D-structure</keyword>
<keyword id="KW-0175">Coiled coil</keyword>
<keyword id="KW-0227">DNA damage</keyword>
<keyword id="KW-0234">DNA repair</keyword>
<keyword id="KW-1017">Isopeptide bond</keyword>
<keyword id="KW-0539">Nucleus</keyword>
<keyword id="KW-0597">Phosphoprotein</keyword>
<keyword id="KW-1267">Proteomics identification</keyword>
<keyword id="KW-1185">Reference proteome</keyword>
<keyword id="KW-0832">Ubl conjugation</keyword>
<accession>Q9NY74</accession>
<accession>Q05BT7</accession>
<accession>Q53SC4</accession>
<gene>
    <name evidence="13" type="primary">ETAA1</name>
    <name evidence="10" type="synonym">ETAA16</name>
</gene>
<name>ETAA1_HUMAN</name>